<organism>
    <name type="scientific">Serratia proteamaculans (strain 568)</name>
    <dbReference type="NCBI Taxonomy" id="399741"/>
    <lineage>
        <taxon>Bacteria</taxon>
        <taxon>Pseudomonadati</taxon>
        <taxon>Pseudomonadota</taxon>
        <taxon>Gammaproteobacteria</taxon>
        <taxon>Enterobacterales</taxon>
        <taxon>Yersiniaceae</taxon>
        <taxon>Serratia</taxon>
    </lineage>
</organism>
<proteinExistence type="inferred from homology"/>
<reference key="1">
    <citation type="submission" date="2007-09" db="EMBL/GenBank/DDBJ databases">
        <title>Complete sequence of chromosome of Serratia proteamaculans 568.</title>
        <authorList>
            <consortium name="US DOE Joint Genome Institute"/>
            <person name="Copeland A."/>
            <person name="Lucas S."/>
            <person name="Lapidus A."/>
            <person name="Barry K."/>
            <person name="Glavina del Rio T."/>
            <person name="Dalin E."/>
            <person name="Tice H."/>
            <person name="Pitluck S."/>
            <person name="Chain P."/>
            <person name="Malfatti S."/>
            <person name="Shin M."/>
            <person name="Vergez L."/>
            <person name="Schmutz J."/>
            <person name="Larimer F."/>
            <person name="Land M."/>
            <person name="Hauser L."/>
            <person name="Kyrpides N."/>
            <person name="Kim E."/>
            <person name="Taghavi S."/>
            <person name="Newman L."/>
            <person name="Vangronsveld J."/>
            <person name="van der Lelie D."/>
            <person name="Richardson P."/>
        </authorList>
    </citation>
    <scope>NUCLEOTIDE SEQUENCE [LARGE SCALE GENOMIC DNA]</scope>
    <source>
        <strain>568</strain>
    </source>
</reference>
<keyword id="KW-0963">Cytoplasm</keyword>
<keyword id="KW-0489">Methyltransferase</keyword>
<keyword id="KW-0698">rRNA processing</keyword>
<keyword id="KW-0949">S-adenosyl-L-methionine</keyword>
<keyword id="KW-0808">Transferase</keyword>
<feature type="chain" id="PRO_1000087711" description="Ribosomal RNA large subunit methyltransferase E">
    <location>
        <begin position="1"/>
        <end position="209"/>
    </location>
</feature>
<feature type="active site" description="Proton acceptor" evidence="1">
    <location>
        <position position="164"/>
    </location>
</feature>
<feature type="binding site" evidence="1">
    <location>
        <position position="63"/>
    </location>
    <ligand>
        <name>S-adenosyl-L-methionine</name>
        <dbReference type="ChEBI" id="CHEBI:59789"/>
    </ligand>
</feature>
<feature type="binding site" evidence="1">
    <location>
        <position position="65"/>
    </location>
    <ligand>
        <name>S-adenosyl-L-methionine</name>
        <dbReference type="ChEBI" id="CHEBI:59789"/>
    </ligand>
</feature>
<feature type="binding site" evidence="1">
    <location>
        <position position="83"/>
    </location>
    <ligand>
        <name>S-adenosyl-L-methionine</name>
        <dbReference type="ChEBI" id="CHEBI:59789"/>
    </ligand>
</feature>
<feature type="binding site" evidence="1">
    <location>
        <position position="99"/>
    </location>
    <ligand>
        <name>S-adenosyl-L-methionine</name>
        <dbReference type="ChEBI" id="CHEBI:59789"/>
    </ligand>
</feature>
<feature type="binding site" evidence="1">
    <location>
        <position position="124"/>
    </location>
    <ligand>
        <name>S-adenosyl-L-methionine</name>
        <dbReference type="ChEBI" id="CHEBI:59789"/>
    </ligand>
</feature>
<accession>A8G900</accession>
<dbReference type="EC" id="2.1.1.166" evidence="1"/>
<dbReference type="EMBL" id="CP000826">
    <property type="protein sequence ID" value="ABV39590.1"/>
    <property type="molecule type" value="Genomic_DNA"/>
</dbReference>
<dbReference type="SMR" id="A8G900"/>
<dbReference type="STRING" id="399741.Spro_0482"/>
<dbReference type="KEGG" id="spe:Spro_0482"/>
<dbReference type="eggNOG" id="COG0293">
    <property type="taxonomic scope" value="Bacteria"/>
</dbReference>
<dbReference type="HOGENOM" id="CLU_009422_4_0_6"/>
<dbReference type="OrthoDB" id="9790080at2"/>
<dbReference type="GO" id="GO:0005737">
    <property type="term" value="C:cytoplasm"/>
    <property type="evidence" value="ECO:0007669"/>
    <property type="project" value="UniProtKB-SubCell"/>
</dbReference>
<dbReference type="GO" id="GO:0008650">
    <property type="term" value="F:rRNA (uridine-2'-O-)-methyltransferase activity"/>
    <property type="evidence" value="ECO:0007669"/>
    <property type="project" value="UniProtKB-UniRule"/>
</dbReference>
<dbReference type="CDD" id="cd02440">
    <property type="entry name" value="AdoMet_MTases"/>
    <property type="match status" value="1"/>
</dbReference>
<dbReference type="FunFam" id="3.40.50.150:FF:000005">
    <property type="entry name" value="Ribosomal RNA large subunit methyltransferase E"/>
    <property type="match status" value="1"/>
</dbReference>
<dbReference type="Gene3D" id="3.40.50.150">
    <property type="entry name" value="Vaccinia Virus protein VP39"/>
    <property type="match status" value="1"/>
</dbReference>
<dbReference type="HAMAP" id="MF_01547">
    <property type="entry name" value="RNA_methyltr_E"/>
    <property type="match status" value="1"/>
</dbReference>
<dbReference type="InterPro" id="IPR050082">
    <property type="entry name" value="RNA_methyltr_RlmE"/>
</dbReference>
<dbReference type="InterPro" id="IPR002877">
    <property type="entry name" value="RNA_MeTrfase_FtsJ_dom"/>
</dbReference>
<dbReference type="InterPro" id="IPR015507">
    <property type="entry name" value="rRNA-MeTfrase_E"/>
</dbReference>
<dbReference type="InterPro" id="IPR004512">
    <property type="entry name" value="rRNA_MeTrfase_gammaproteobac"/>
</dbReference>
<dbReference type="InterPro" id="IPR029063">
    <property type="entry name" value="SAM-dependent_MTases_sf"/>
</dbReference>
<dbReference type="NCBIfam" id="NF008390">
    <property type="entry name" value="PRK11188.1"/>
    <property type="match status" value="1"/>
</dbReference>
<dbReference type="NCBIfam" id="TIGR00438">
    <property type="entry name" value="rrmJ"/>
    <property type="match status" value="1"/>
</dbReference>
<dbReference type="PANTHER" id="PTHR10920">
    <property type="entry name" value="RIBOSOMAL RNA METHYLTRANSFERASE"/>
    <property type="match status" value="1"/>
</dbReference>
<dbReference type="PANTHER" id="PTHR10920:SF18">
    <property type="entry name" value="RRNA METHYLTRANSFERASE 2, MITOCHONDRIAL"/>
    <property type="match status" value="1"/>
</dbReference>
<dbReference type="Pfam" id="PF01728">
    <property type="entry name" value="FtsJ"/>
    <property type="match status" value="1"/>
</dbReference>
<dbReference type="PIRSF" id="PIRSF005461">
    <property type="entry name" value="23S_rRNA_mtase"/>
    <property type="match status" value="1"/>
</dbReference>
<dbReference type="SUPFAM" id="SSF53335">
    <property type="entry name" value="S-adenosyl-L-methionine-dependent methyltransferases"/>
    <property type="match status" value="1"/>
</dbReference>
<name>RLME_SERP5</name>
<protein>
    <recommendedName>
        <fullName evidence="1">Ribosomal RNA large subunit methyltransferase E</fullName>
        <ecNumber evidence="1">2.1.1.166</ecNumber>
    </recommendedName>
    <alternativeName>
        <fullName evidence="1">23S rRNA Um2552 methyltransferase</fullName>
    </alternativeName>
    <alternativeName>
        <fullName evidence="1">rRNA (uridine-2'-O-)-methyltransferase</fullName>
    </alternativeName>
</protein>
<comment type="function">
    <text evidence="1">Specifically methylates the uridine in position 2552 of 23S rRNA at the 2'-O position of the ribose in the fully assembled 50S ribosomal subunit.</text>
</comment>
<comment type="catalytic activity">
    <reaction evidence="1">
        <text>uridine(2552) in 23S rRNA + S-adenosyl-L-methionine = 2'-O-methyluridine(2552) in 23S rRNA + S-adenosyl-L-homocysteine + H(+)</text>
        <dbReference type="Rhea" id="RHEA:42720"/>
        <dbReference type="Rhea" id="RHEA-COMP:10202"/>
        <dbReference type="Rhea" id="RHEA-COMP:10203"/>
        <dbReference type="ChEBI" id="CHEBI:15378"/>
        <dbReference type="ChEBI" id="CHEBI:57856"/>
        <dbReference type="ChEBI" id="CHEBI:59789"/>
        <dbReference type="ChEBI" id="CHEBI:65315"/>
        <dbReference type="ChEBI" id="CHEBI:74478"/>
        <dbReference type="EC" id="2.1.1.166"/>
    </reaction>
</comment>
<comment type="subcellular location">
    <subcellularLocation>
        <location evidence="1">Cytoplasm</location>
    </subcellularLocation>
</comment>
<comment type="similarity">
    <text evidence="1">Belongs to the class I-like SAM-binding methyltransferase superfamily. RNA methyltransferase RlmE family.</text>
</comment>
<evidence type="ECO:0000255" key="1">
    <source>
        <dbReference type="HAMAP-Rule" id="MF_01547"/>
    </source>
</evidence>
<sequence>MANKKRSASSSRWLQEHFSDKYVQQAQKKGLRSRAWFKLDEIQQSDKLFKPGMTVVDLGAAPGGWSQYVVTQIGGSGRIIACDILPMDPIVGVDFLQGDFRDELVLKALLERVGESKVQVVMSDMAPNMSGTPAVDIPRSMYLVELALGMCRDVLAPGGSFLVKVFQGDGFDEYLREIRSLFTKVKIRKPDASRARSREVYIVATGRKL</sequence>
<gene>
    <name evidence="1" type="primary">rlmE</name>
    <name evidence="1" type="synonym">ftsJ</name>
    <name evidence="1" type="synonym">rrmJ</name>
    <name type="ordered locus">Spro_0482</name>
</gene>